<evidence type="ECO:0000255" key="1">
    <source>
        <dbReference type="PROSITE-ProRule" id="PRU01016"/>
    </source>
</evidence>
<evidence type="ECO:0000255" key="2">
    <source>
        <dbReference type="PROSITE-ProRule" id="PRU10018"/>
    </source>
</evidence>
<evidence type="ECO:0000269" key="3">
    <source>
    </source>
</evidence>
<evidence type="ECO:0000303" key="4">
    <source>
    </source>
</evidence>
<gene>
    <name type="primary">mspIM</name>
</gene>
<comment type="function">
    <text evidence="3 4">A methylase, recognizes the double-stranded sequence 5'-CCGG-3', methylates C-1 on both strands, and protects the DNA from cleavage by the MspI endonuclease.</text>
</comment>
<comment type="catalytic activity">
    <reaction evidence="2">
        <text>a 2'-deoxycytidine in DNA + S-adenosyl-L-methionine = a 5-methyl-2'-deoxycytidine in DNA + S-adenosyl-L-homocysteine + H(+)</text>
        <dbReference type="Rhea" id="RHEA:13681"/>
        <dbReference type="Rhea" id="RHEA-COMP:11369"/>
        <dbReference type="Rhea" id="RHEA-COMP:11370"/>
        <dbReference type="ChEBI" id="CHEBI:15378"/>
        <dbReference type="ChEBI" id="CHEBI:57856"/>
        <dbReference type="ChEBI" id="CHEBI:59789"/>
        <dbReference type="ChEBI" id="CHEBI:85452"/>
        <dbReference type="ChEBI" id="CHEBI:85454"/>
        <dbReference type="EC" id="2.1.1.37"/>
    </reaction>
</comment>
<comment type="similarity">
    <text evidence="1">Belongs to the class I-like SAM-binding methyltransferase superfamily. C5-methyltransferase family.</text>
</comment>
<keyword id="KW-0238">DNA-binding</keyword>
<keyword id="KW-0489">Methyltransferase</keyword>
<keyword id="KW-0680">Restriction system</keyword>
<keyword id="KW-0949">S-adenosyl-L-methionine</keyword>
<keyword id="KW-0808">Transferase</keyword>
<sequence>MKPEILKLIRSKLDLTQKQASEIIEVSDKTWQQWESGKTEMHPAYYSFLQEKLKDKINFEELSAQKTLQKKIFDKYNQNQITKNAEELAEITHIEERKDAYSSDFKFIDLFSGIGGIRQSFEVNGGKCVFSSEIDPFAKFTYYTNFGVVPFGDITKVEATTIPQHDILCAGFPCQPFSHIGKREGFEHPTQGTMFHEIVRIIETKKTPVLFLENVPGLINHDDGNTLKVIIETLEDMGYKVHHTVLDASHFGIPQKRKRFYLVAFLNQNIHFEFPKPPMISKDIGEVLESDVTGYSISEHLQKSYLFKKDDGKPSLIDKNTTGAVKTLVSTYHKIQRLTGTFVKDGETGIRLLTTNECKAIMGFPKDFVIPVSRTQMYRQMGNSVVVPVVTKIAEQISLALKTVNQQSPQENFELELV</sequence>
<dbReference type="EC" id="2.1.1.37"/>
<dbReference type="EMBL" id="X14191">
    <property type="protein sequence ID" value="CAA32393.1"/>
    <property type="molecule type" value="Genomic_DNA"/>
</dbReference>
<dbReference type="PIR" id="S04188">
    <property type="entry name" value="CTKEMM"/>
</dbReference>
<dbReference type="SMR" id="P11408"/>
<dbReference type="REBASE" id="3447">
    <property type="entry name" value="M.MspI"/>
</dbReference>
<dbReference type="PRO" id="PR:P11408"/>
<dbReference type="GO" id="GO:0003886">
    <property type="term" value="F:DNA (cytosine-5-)-methyltransferase activity"/>
    <property type="evidence" value="ECO:0007669"/>
    <property type="project" value="UniProtKB-EC"/>
</dbReference>
<dbReference type="GO" id="GO:0003677">
    <property type="term" value="F:DNA binding"/>
    <property type="evidence" value="ECO:0007669"/>
    <property type="project" value="UniProtKB-KW"/>
</dbReference>
<dbReference type="GO" id="GO:0009307">
    <property type="term" value="P:DNA restriction-modification system"/>
    <property type="evidence" value="ECO:0007669"/>
    <property type="project" value="UniProtKB-KW"/>
</dbReference>
<dbReference type="GO" id="GO:0032259">
    <property type="term" value="P:methylation"/>
    <property type="evidence" value="ECO:0007669"/>
    <property type="project" value="UniProtKB-KW"/>
</dbReference>
<dbReference type="CDD" id="cd00315">
    <property type="entry name" value="Cyt_C5_DNA_methylase"/>
    <property type="match status" value="1"/>
</dbReference>
<dbReference type="CDD" id="cd00093">
    <property type="entry name" value="HTH_XRE"/>
    <property type="match status" value="1"/>
</dbReference>
<dbReference type="Gene3D" id="3.90.120.10">
    <property type="entry name" value="DNA Methylase, subunit A, domain 2"/>
    <property type="match status" value="1"/>
</dbReference>
<dbReference type="Gene3D" id="1.10.260.40">
    <property type="entry name" value="lambda repressor-like DNA-binding domains"/>
    <property type="match status" value="1"/>
</dbReference>
<dbReference type="Gene3D" id="3.40.50.150">
    <property type="entry name" value="Vaccinia Virus protein VP39"/>
    <property type="match status" value="1"/>
</dbReference>
<dbReference type="InterPro" id="IPR050750">
    <property type="entry name" value="C5-MTase"/>
</dbReference>
<dbReference type="InterPro" id="IPR018117">
    <property type="entry name" value="C5_DNA_meth_AS"/>
</dbReference>
<dbReference type="InterPro" id="IPR001525">
    <property type="entry name" value="C5_MeTfrase"/>
</dbReference>
<dbReference type="InterPro" id="IPR031303">
    <property type="entry name" value="C5_meth_CS"/>
</dbReference>
<dbReference type="InterPro" id="IPR001387">
    <property type="entry name" value="Cro/C1-type_HTH"/>
</dbReference>
<dbReference type="InterPro" id="IPR010982">
    <property type="entry name" value="Lambda_DNA-bd_dom_sf"/>
</dbReference>
<dbReference type="InterPro" id="IPR029063">
    <property type="entry name" value="SAM-dependent_MTases_sf"/>
</dbReference>
<dbReference type="NCBIfam" id="TIGR00675">
    <property type="entry name" value="dcm"/>
    <property type="match status" value="1"/>
</dbReference>
<dbReference type="PANTHER" id="PTHR46098">
    <property type="entry name" value="TRNA (CYTOSINE(38)-C(5))-METHYLTRANSFERASE"/>
    <property type="match status" value="1"/>
</dbReference>
<dbReference type="PANTHER" id="PTHR46098:SF1">
    <property type="entry name" value="TRNA (CYTOSINE(38)-C(5))-METHYLTRANSFERASE"/>
    <property type="match status" value="1"/>
</dbReference>
<dbReference type="Pfam" id="PF00145">
    <property type="entry name" value="DNA_methylase"/>
    <property type="match status" value="1"/>
</dbReference>
<dbReference type="PRINTS" id="PR00105">
    <property type="entry name" value="C5METTRFRASE"/>
</dbReference>
<dbReference type="SUPFAM" id="SSF47413">
    <property type="entry name" value="lambda repressor-like DNA-binding domains"/>
    <property type="match status" value="1"/>
</dbReference>
<dbReference type="SUPFAM" id="SSF53335">
    <property type="entry name" value="S-adenosyl-L-methionine-dependent methyltransferases"/>
    <property type="match status" value="1"/>
</dbReference>
<dbReference type="PROSITE" id="PS00094">
    <property type="entry name" value="C5_MTASE_1"/>
    <property type="match status" value="1"/>
</dbReference>
<dbReference type="PROSITE" id="PS00095">
    <property type="entry name" value="C5_MTASE_2"/>
    <property type="match status" value="1"/>
</dbReference>
<dbReference type="PROSITE" id="PS51679">
    <property type="entry name" value="SAM_MT_C5"/>
    <property type="match status" value="1"/>
</dbReference>
<feature type="chain" id="PRO_0000087895" description="Type II methyltransferase M.MspI">
    <location>
        <begin position="1"/>
        <end position="418"/>
    </location>
</feature>
<feature type="domain" description="SAM-dependent MTase C5-type" evidence="1">
    <location>
        <begin position="105"/>
        <end position="404"/>
    </location>
</feature>
<feature type="active site" evidence="1 2">
    <location>
        <position position="174"/>
    </location>
</feature>
<protein>
    <recommendedName>
        <fullName evidence="4">Type II methyltransferase M.MspI</fullName>
        <shortName evidence="4">M.MspI</shortName>
        <ecNumber>2.1.1.37</ecNumber>
    </recommendedName>
    <alternativeName>
        <fullName>Cytosine-specific methyltransferase MspI</fullName>
    </alternativeName>
    <alternativeName>
        <fullName>Modification methylase MspI</fullName>
    </alternativeName>
</protein>
<accession>P11408</accession>
<organism>
    <name type="scientific">Moraxella sp</name>
    <dbReference type="NCBI Taxonomy" id="479"/>
    <lineage>
        <taxon>Bacteria</taxon>
        <taxon>Pseudomonadati</taxon>
        <taxon>Pseudomonadota</taxon>
        <taxon>Gammaproteobacteria</taxon>
        <taxon>Moraxellales</taxon>
        <taxon>Moraxellaceae</taxon>
        <taxon>Moraxella</taxon>
    </lineage>
</organism>
<proteinExistence type="inferred from homology"/>
<reference key="1">
    <citation type="journal article" date="1989" name="Nucleic Acids Res.">
        <title>Cloning and characterization of the genes encoding the MspI restriction modification system.</title>
        <authorList>
            <person name="Lin P.M."/>
            <person name="Lee C.H."/>
            <person name="Roberts R.J."/>
        </authorList>
    </citation>
    <scope>NUCLEOTIDE SEQUENCE [GENOMIC DNA]</scope>
    <scope>FUNCTION</scope>
    <source>
        <strain>ATCC 49670</strain>
    </source>
</reference>
<reference key="2">
    <citation type="journal article" date="2003" name="Nucleic Acids Res.">
        <title>A nomenclature for restriction enzymes, DNA methyltransferases, homing endonucleases and their genes.</title>
        <authorList>
            <person name="Roberts R.J."/>
            <person name="Belfort M."/>
            <person name="Bestor T."/>
            <person name="Bhagwat A.S."/>
            <person name="Bickle T.A."/>
            <person name="Bitinaite J."/>
            <person name="Blumenthal R.M."/>
            <person name="Degtyarev S.K."/>
            <person name="Dryden D.T."/>
            <person name="Dybvig K."/>
            <person name="Firman K."/>
            <person name="Gromova E.S."/>
            <person name="Gumport R.I."/>
            <person name="Halford S.E."/>
            <person name="Hattman S."/>
            <person name="Heitman J."/>
            <person name="Hornby D.P."/>
            <person name="Janulaitis A."/>
            <person name="Jeltsch A."/>
            <person name="Josephsen J."/>
            <person name="Kiss A."/>
            <person name="Klaenhammer T.R."/>
            <person name="Kobayashi I."/>
            <person name="Kong H."/>
            <person name="Krueger D.H."/>
            <person name="Lacks S."/>
            <person name="Marinus M.G."/>
            <person name="Miyahara M."/>
            <person name="Morgan R.D."/>
            <person name="Murray N.E."/>
            <person name="Nagaraja V."/>
            <person name="Piekarowicz A."/>
            <person name="Pingoud A."/>
            <person name="Raleigh E."/>
            <person name="Rao D.N."/>
            <person name="Reich N."/>
            <person name="Repin V.E."/>
            <person name="Selker E.U."/>
            <person name="Shaw P.C."/>
            <person name="Stein D.C."/>
            <person name="Stoddard B.L."/>
            <person name="Szybalski W."/>
            <person name="Trautner T.A."/>
            <person name="Van Etten J.L."/>
            <person name="Vitor J.M."/>
            <person name="Wilson G.G."/>
            <person name="Xu S.Y."/>
        </authorList>
    </citation>
    <scope>NOMENCLATURE</scope>
</reference>
<name>MTM1_MORSP</name>